<protein>
    <recommendedName>
        <fullName evidence="1">GTPase Der</fullName>
    </recommendedName>
    <alternativeName>
        <fullName evidence="1">GTP-binding protein EngA</fullName>
    </alternativeName>
</protein>
<name>DER_BORBU</name>
<feature type="chain" id="PRO_0000178968" description="GTPase Der">
    <location>
        <begin position="1"/>
        <end position="433"/>
    </location>
</feature>
<feature type="domain" description="EngA-type G 1">
    <location>
        <begin position="5"/>
        <end position="167"/>
    </location>
</feature>
<feature type="domain" description="EngA-type G 2">
    <location>
        <begin position="174"/>
        <end position="349"/>
    </location>
</feature>
<feature type="domain" description="KH-like" evidence="1">
    <location>
        <begin position="349"/>
        <end position="429"/>
    </location>
</feature>
<feature type="binding site" evidence="1">
    <location>
        <begin position="11"/>
        <end position="18"/>
    </location>
    <ligand>
        <name>GTP</name>
        <dbReference type="ChEBI" id="CHEBI:37565"/>
        <label>1</label>
    </ligand>
</feature>
<feature type="binding site" evidence="1">
    <location>
        <begin position="58"/>
        <end position="62"/>
    </location>
    <ligand>
        <name>GTP</name>
        <dbReference type="ChEBI" id="CHEBI:37565"/>
        <label>1</label>
    </ligand>
</feature>
<feature type="binding site" evidence="1">
    <location>
        <begin position="119"/>
        <end position="122"/>
    </location>
    <ligand>
        <name>GTP</name>
        <dbReference type="ChEBI" id="CHEBI:37565"/>
        <label>1</label>
    </ligand>
</feature>
<feature type="binding site" evidence="1">
    <location>
        <begin position="180"/>
        <end position="187"/>
    </location>
    <ligand>
        <name>GTP</name>
        <dbReference type="ChEBI" id="CHEBI:37565"/>
        <label>2</label>
    </ligand>
</feature>
<feature type="binding site" evidence="1">
    <location>
        <begin position="227"/>
        <end position="231"/>
    </location>
    <ligand>
        <name>GTP</name>
        <dbReference type="ChEBI" id="CHEBI:37565"/>
        <label>2</label>
    </ligand>
</feature>
<feature type="binding site" evidence="1">
    <location>
        <begin position="292"/>
        <end position="295"/>
    </location>
    <ligand>
        <name>GTP</name>
        <dbReference type="ChEBI" id="CHEBI:37565"/>
        <label>2</label>
    </ligand>
</feature>
<dbReference type="EMBL" id="AE000783">
    <property type="protein sequence ID" value="AAC66872.1"/>
    <property type="molecule type" value="Genomic_DNA"/>
</dbReference>
<dbReference type="PIR" id="C70163">
    <property type="entry name" value="C70163"/>
</dbReference>
<dbReference type="RefSeq" id="NP_212642.1">
    <property type="nucleotide sequence ID" value="NC_001318.1"/>
</dbReference>
<dbReference type="RefSeq" id="WP_002657984.1">
    <property type="nucleotide sequence ID" value="NC_001318.1"/>
</dbReference>
<dbReference type="SMR" id="O51461"/>
<dbReference type="STRING" id="224326.BB_0508"/>
<dbReference type="PaxDb" id="224326-BB_0508"/>
<dbReference type="EnsemblBacteria" id="AAC66872">
    <property type="protein sequence ID" value="AAC66872"/>
    <property type="gene ID" value="BB_0508"/>
</dbReference>
<dbReference type="GeneID" id="56567943"/>
<dbReference type="KEGG" id="bbu:BB_0508"/>
<dbReference type="PATRIC" id="fig|224326.49.peg.899"/>
<dbReference type="HOGENOM" id="CLU_016077_6_1_12"/>
<dbReference type="OrthoDB" id="9805918at2"/>
<dbReference type="Proteomes" id="UP000001807">
    <property type="component" value="Chromosome"/>
</dbReference>
<dbReference type="GO" id="GO:0005525">
    <property type="term" value="F:GTP binding"/>
    <property type="evidence" value="ECO:0007669"/>
    <property type="project" value="UniProtKB-UniRule"/>
</dbReference>
<dbReference type="GO" id="GO:0042254">
    <property type="term" value="P:ribosome biogenesis"/>
    <property type="evidence" value="ECO:0007669"/>
    <property type="project" value="UniProtKB-KW"/>
</dbReference>
<dbReference type="CDD" id="cd01894">
    <property type="entry name" value="EngA1"/>
    <property type="match status" value="1"/>
</dbReference>
<dbReference type="CDD" id="cd01895">
    <property type="entry name" value="EngA2"/>
    <property type="match status" value="1"/>
</dbReference>
<dbReference type="Gene3D" id="3.30.300.20">
    <property type="match status" value="1"/>
</dbReference>
<dbReference type="Gene3D" id="3.40.50.300">
    <property type="entry name" value="P-loop containing nucleotide triphosphate hydrolases"/>
    <property type="match status" value="2"/>
</dbReference>
<dbReference type="HAMAP" id="MF_00195">
    <property type="entry name" value="GTPase_Der"/>
    <property type="match status" value="1"/>
</dbReference>
<dbReference type="InterPro" id="IPR031166">
    <property type="entry name" value="G_ENGA"/>
</dbReference>
<dbReference type="InterPro" id="IPR006073">
    <property type="entry name" value="GTP-bd"/>
</dbReference>
<dbReference type="InterPro" id="IPR016484">
    <property type="entry name" value="GTPase_Der"/>
</dbReference>
<dbReference type="InterPro" id="IPR032859">
    <property type="entry name" value="KH_dom-like"/>
</dbReference>
<dbReference type="InterPro" id="IPR015946">
    <property type="entry name" value="KH_dom-like_a/b"/>
</dbReference>
<dbReference type="InterPro" id="IPR027417">
    <property type="entry name" value="P-loop_NTPase"/>
</dbReference>
<dbReference type="InterPro" id="IPR005225">
    <property type="entry name" value="Small_GTP-bd"/>
</dbReference>
<dbReference type="NCBIfam" id="TIGR03594">
    <property type="entry name" value="GTPase_EngA"/>
    <property type="match status" value="1"/>
</dbReference>
<dbReference type="NCBIfam" id="TIGR00231">
    <property type="entry name" value="small_GTP"/>
    <property type="match status" value="2"/>
</dbReference>
<dbReference type="PANTHER" id="PTHR43834">
    <property type="entry name" value="GTPASE DER"/>
    <property type="match status" value="1"/>
</dbReference>
<dbReference type="PANTHER" id="PTHR43834:SF6">
    <property type="entry name" value="GTPASE DER"/>
    <property type="match status" value="1"/>
</dbReference>
<dbReference type="Pfam" id="PF14714">
    <property type="entry name" value="KH_dom-like"/>
    <property type="match status" value="1"/>
</dbReference>
<dbReference type="Pfam" id="PF01926">
    <property type="entry name" value="MMR_HSR1"/>
    <property type="match status" value="2"/>
</dbReference>
<dbReference type="PIRSF" id="PIRSF006485">
    <property type="entry name" value="GTP-binding_EngA"/>
    <property type="match status" value="1"/>
</dbReference>
<dbReference type="PRINTS" id="PR00326">
    <property type="entry name" value="GTP1OBG"/>
</dbReference>
<dbReference type="SUPFAM" id="SSF52540">
    <property type="entry name" value="P-loop containing nucleoside triphosphate hydrolases"/>
    <property type="match status" value="2"/>
</dbReference>
<dbReference type="PROSITE" id="PS51712">
    <property type="entry name" value="G_ENGA"/>
    <property type="match status" value="2"/>
</dbReference>
<organism>
    <name type="scientific">Borreliella burgdorferi (strain ATCC 35210 / DSM 4680 / CIP 102532 / B31)</name>
    <name type="common">Borrelia burgdorferi</name>
    <dbReference type="NCBI Taxonomy" id="224326"/>
    <lineage>
        <taxon>Bacteria</taxon>
        <taxon>Pseudomonadati</taxon>
        <taxon>Spirochaetota</taxon>
        <taxon>Spirochaetia</taxon>
        <taxon>Spirochaetales</taxon>
        <taxon>Borreliaceae</taxon>
        <taxon>Borreliella</taxon>
    </lineage>
</organism>
<accession>O51461</accession>
<proteinExistence type="inferred from homology"/>
<reference key="1">
    <citation type="journal article" date="1997" name="Nature">
        <title>Genomic sequence of a Lyme disease spirochaete, Borrelia burgdorferi.</title>
        <authorList>
            <person name="Fraser C.M."/>
            <person name="Casjens S."/>
            <person name="Huang W.M."/>
            <person name="Sutton G.G."/>
            <person name="Clayton R.A."/>
            <person name="Lathigra R."/>
            <person name="White O."/>
            <person name="Ketchum K.A."/>
            <person name="Dodson R.J."/>
            <person name="Hickey E.K."/>
            <person name="Gwinn M.L."/>
            <person name="Dougherty B.A."/>
            <person name="Tomb J.-F."/>
            <person name="Fleischmann R.D."/>
            <person name="Richardson D.L."/>
            <person name="Peterson J.D."/>
            <person name="Kerlavage A.R."/>
            <person name="Quackenbush J."/>
            <person name="Salzberg S.L."/>
            <person name="Hanson M."/>
            <person name="van Vugt R."/>
            <person name="Palmer N."/>
            <person name="Adams M.D."/>
            <person name="Gocayne J.D."/>
            <person name="Weidman J.F."/>
            <person name="Utterback T.R."/>
            <person name="Watthey L."/>
            <person name="McDonald L.A."/>
            <person name="Artiach P."/>
            <person name="Bowman C."/>
            <person name="Garland S.A."/>
            <person name="Fujii C."/>
            <person name="Cotton M.D."/>
            <person name="Horst K."/>
            <person name="Roberts K.M."/>
            <person name="Hatch B."/>
            <person name="Smith H.O."/>
            <person name="Venter J.C."/>
        </authorList>
    </citation>
    <scope>NUCLEOTIDE SEQUENCE [LARGE SCALE GENOMIC DNA]</scope>
    <source>
        <strain>ATCC 35210 / DSM 4680 / CIP 102532 / B31</strain>
    </source>
</reference>
<comment type="function">
    <text evidence="1">GTPase that plays an essential role in the late steps of ribosome biogenesis.</text>
</comment>
<comment type="subunit">
    <text evidence="1">Associates with the 50S ribosomal subunit.</text>
</comment>
<comment type="similarity">
    <text evidence="1">Belongs to the TRAFAC class TrmE-Era-EngA-EngB-Septin-like GTPase superfamily. EngA (Der) GTPase family.</text>
</comment>
<evidence type="ECO:0000255" key="1">
    <source>
        <dbReference type="HAMAP-Rule" id="MF_00195"/>
    </source>
</evidence>
<sequence length="433" mass="49724">MLSYKKVLIVGRPNVGKSALFNRILDTKRSITESTYGVTRDLVEEVCKVDSFKFKLIDTGGFTILKDEISKIVVQKVLSSLEKVDLILLVLDINEILLEDYQIIERLRKYSSKVVLVLNKVDTKDKECLAHEFHNLGFKRYFLVSAAHCRGITKLRDFLKVEVGEVGIESGADIKVGIIGKPNSGKSTLINYLSGNEIAIVSDQPGTTRDFIKTKFTRNGKVFEVVDTAGIRRRARVNEIVEYYSVNRALKVIDMVDIVFLLIDVQEKLTSQDKKIAHYVTKKGKGIVIVFSKWDLVDESKGYFEALKSHVKFFFPILNFAPIFRISVHKRIGLDSLFKESFKLKDQLELKTSTPDLNKMLNLWIKDYHLNISHKIKYITQVSTNPVKFILFANKIKNFPNSYYNYLVNNLRKIGYKNIPILVELKEKIRDLK</sequence>
<keyword id="KW-0342">GTP-binding</keyword>
<keyword id="KW-0547">Nucleotide-binding</keyword>
<keyword id="KW-1185">Reference proteome</keyword>
<keyword id="KW-0677">Repeat</keyword>
<keyword id="KW-0690">Ribosome biogenesis</keyword>
<gene>
    <name evidence="1" type="primary">der</name>
    <name type="synonym">engA</name>
    <name type="ordered locus">BB_0508</name>
</gene>